<organism>
    <name type="scientific">Salmonella enteritidis PT4 (strain P125109)</name>
    <dbReference type="NCBI Taxonomy" id="550537"/>
    <lineage>
        <taxon>Bacteria</taxon>
        <taxon>Pseudomonadati</taxon>
        <taxon>Pseudomonadota</taxon>
        <taxon>Gammaproteobacteria</taxon>
        <taxon>Enterobacterales</taxon>
        <taxon>Enterobacteriaceae</taxon>
        <taxon>Salmonella</taxon>
    </lineage>
</organism>
<gene>
    <name evidence="1" type="primary">tus</name>
    <name type="ordered locus">SEN1578</name>
</gene>
<evidence type="ECO:0000255" key="1">
    <source>
        <dbReference type="HAMAP-Rule" id="MF_00483"/>
    </source>
</evidence>
<protein>
    <recommendedName>
        <fullName evidence="1">DNA replication terminus site-binding protein</fullName>
        <shortName evidence="1">Ter-binding protein</shortName>
    </recommendedName>
</protein>
<accession>B5QUF5</accession>
<feature type="chain" id="PRO_1000126044" description="DNA replication terminus site-binding protein">
    <location>
        <begin position="1"/>
        <end position="309"/>
    </location>
</feature>
<keyword id="KW-0963">Cytoplasm</keyword>
<keyword id="KW-0235">DNA replication</keyword>
<keyword id="KW-0238">DNA-binding</keyword>
<sequence length="309" mass="35487">MSRYDLVERLNGTFRQIEQHLAALTDNLQQHSLLIARVFSLPQVTKEAEHAPLDTIEVTQHLGKEAETLALRHYRHLFIQQQSENRSSKAAVRLPGVLCYQVDNATQLDLENQVQRINQLKTTFEQMVTVESGLPSAARFEWVHRHLPGLITLNAYRTLTLINNPATIRFGWANKHIIKNLSRDEVLSQLKKSLASPRSVPPWTREQWQFKLEREYQDIAALPQQARLKIKRPVKVQPIARIWYKGQQKQVQHACPTPIIALINTDNGAGVPDIGGLENYDADNIQHRFKPQAQPLRLIIPRLHLYVAD</sequence>
<proteinExistence type="inferred from homology"/>
<dbReference type="EMBL" id="AM933172">
    <property type="protein sequence ID" value="CAR33159.1"/>
    <property type="molecule type" value="Genomic_DNA"/>
</dbReference>
<dbReference type="RefSeq" id="WP_000092497.1">
    <property type="nucleotide sequence ID" value="NC_011294.1"/>
</dbReference>
<dbReference type="SMR" id="B5QUF5"/>
<dbReference type="KEGG" id="set:SEN1578"/>
<dbReference type="HOGENOM" id="CLU_078181_0_0_6"/>
<dbReference type="Proteomes" id="UP000000613">
    <property type="component" value="Chromosome"/>
</dbReference>
<dbReference type="GO" id="GO:0005737">
    <property type="term" value="C:cytoplasm"/>
    <property type="evidence" value="ECO:0007669"/>
    <property type="project" value="UniProtKB-SubCell"/>
</dbReference>
<dbReference type="GO" id="GO:0003677">
    <property type="term" value="F:DNA binding"/>
    <property type="evidence" value="ECO:0007669"/>
    <property type="project" value="UniProtKB-UniRule"/>
</dbReference>
<dbReference type="GO" id="GO:0006274">
    <property type="term" value="P:DNA replication termination"/>
    <property type="evidence" value="ECO:0007669"/>
    <property type="project" value="UniProtKB-UniRule"/>
</dbReference>
<dbReference type="Gene3D" id="3.30.54.10">
    <property type="match status" value="1"/>
</dbReference>
<dbReference type="Gene3D" id="3.50.14.10">
    <property type="entry name" value="Replication terminator Tus, domain 1 superfamily/Replication terminator Tus"/>
    <property type="match status" value="1"/>
</dbReference>
<dbReference type="HAMAP" id="MF_00483">
    <property type="entry name" value="Rep_term_Tus"/>
    <property type="match status" value="1"/>
</dbReference>
<dbReference type="InterPro" id="IPR008865">
    <property type="entry name" value="DNA_replication_term_site-bd"/>
</dbReference>
<dbReference type="InterPro" id="IPR036381">
    <property type="entry name" value="Tus_dom1"/>
</dbReference>
<dbReference type="InterPro" id="IPR036384">
    <property type="entry name" value="Tus_sf"/>
</dbReference>
<dbReference type="NCBIfam" id="TIGR02648">
    <property type="entry name" value="rep_term_tus"/>
    <property type="match status" value="1"/>
</dbReference>
<dbReference type="Pfam" id="PF05472">
    <property type="entry name" value="Ter"/>
    <property type="match status" value="1"/>
</dbReference>
<dbReference type="SUPFAM" id="SSF56596">
    <property type="entry name" value="Replication terminator protein (Tus)"/>
    <property type="match status" value="1"/>
</dbReference>
<reference key="1">
    <citation type="journal article" date="2008" name="Genome Res.">
        <title>Comparative genome analysis of Salmonella enteritidis PT4 and Salmonella gallinarum 287/91 provides insights into evolutionary and host adaptation pathways.</title>
        <authorList>
            <person name="Thomson N.R."/>
            <person name="Clayton D.J."/>
            <person name="Windhorst D."/>
            <person name="Vernikos G."/>
            <person name="Davidson S."/>
            <person name="Churcher C."/>
            <person name="Quail M.A."/>
            <person name="Stevens M."/>
            <person name="Jones M.A."/>
            <person name="Watson M."/>
            <person name="Barron A."/>
            <person name="Layton A."/>
            <person name="Pickard D."/>
            <person name="Kingsley R.A."/>
            <person name="Bignell A."/>
            <person name="Clark L."/>
            <person name="Harris B."/>
            <person name="Ormond D."/>
            <person name="Abdellah Z."/>
            <person name="Brooks K."/>
            <person name="Cherevach I."/>
            <person name="Chillingworth T."/>
            <person name="Woodward J."/>
            <person name="Norberczak H."/>
            <person name="Lord A."/>
            <person name="Arrowsmith C."/>
            <person name="Jagels K."/>
            <person name="Moule S."/>
            <person name="Mungall K."/>
            <person name="Saunders M."/>
            <person name="Whitehead S."/>
            <person name="Chabalgoity J.A."/>
            <person name="Maskell D."/>
            <person name="Humphreys T."/>
            <person name="Roberts M."/>
            <person name="Barrow P.A."/>
            <person name="Dougan G."/>
            <person name="Parkhill J."/>
        </authorList>
    </citation>
    <scope>NUCLEOTIDE SEQUENCE [LARGE SCALE GENOMIC DNA]</scope>
    <source>
        <strain>P125109</strain>
    </source>
</reference>
<comment type="function">
    <text evidence="1">Trans-acting protein required for termination of DNA replication. Binds to DNA replication terminator sequences (terA to terF) to prevent the passage of replication forks. The termination efficiency will be affected by the affinity of this protein for the terminator sequence.</text>
</comment>
<comment type="subcellular location">
    <subcellularLocation>
        <location evidence="1">Cytoplasm</location>
    </subcellularLocation>
</comment>
<comment type="similarity">
    <text evidence="1">Belongs to the Tus family.</text>
</comment>
<name>TUS_SALEP</name>